<feature type="signal peptide" evidence="2">
    <location>
        <begin position="1"/>
        <end position="20"/>
    </location>
</feature>
<feature type="propeptide" id="PRO_0000011401">
    <location>
        <begin position="21"/>
        <end position="50"/>
    </location>
</feature>
<feature type="peptide" id="PRO_0000011402" description="Glucagon">
    <location>
        <begin position="53"/>
        <end position="81"/>
    </location>
</feature>
<feature type="propeptide" id="PRO_0000011403">
    <location>
        <begin position="84"/>
        <end position="95"/>
    </location>
</feature>
<feature type="peptide" id="PRO_0000011404" description="Glucagon-like peptide 1A">
    <location>
        <begin position="97"/>
        <end position="133"/>
    </location>
</feature>
<feature type="propeptide" id="PRO_0000011405">
    <location>
        <begin position="136"/>
        <end position="140"/>
    </location>
</feature>
<feature type="peptide" id="PRO_0000011406" description="Glucagon-like peptide 1B">
    <location>
        <begin position="142"/>
        <end position="172"/>
    </location>
</feature>
<feature type="propeptide" id="PRO_0000011407">
    <location>
        <begin position="175"/>
        <end position="178"/>
    </location>
</feature>
<feature type="peptide" id="PRO_0000011408" description="Glucagon-like peptide 1C">
    <location>
        <begin position="180"/>
        <end position="210"/>
    </location>
</feature>
<feature type="propeptide" id="PRO_0000011409">
    <location>
        <begin position="213"/>
        <end position="219"/>
    </location>
</feature>
<feature type="region of interest" description="Disordered" evidence="1">
    <location>
        <begin position="23"/>
        <end position="43"/>
    </location>
</feature>
<evidence type="ECO:0000256" key="1">
    <source>
        <dbReference type="SAM" id="MobiDB-lite"/>
    </source>
</evidence>
<evidence type="ECO:0000305" key="2"/>
<reference evidence="2" key="1">
    <citation type="journal article" date="1997" name="Proc. Natl. Acad. Sci. U.S.A.">
        <title>The Xenopus proglucagon gene encodes novel GLP-1-like peptides with insulinotropic properties.</title>
        <authorList>
            <person name="Irwin D.M."/>
            <person name="Satkunarajah M."/>
            <person name="Wen Y."/>
            <person name="Brubaker P.L."/>
            <person name="Pederson R.A."/>
            <person name="Wheeler M.B."/>
        </authorList>
    </citation>
    <scope>NUCLEOTIDE SEQUENCE [MRNA]</scope>
    <source>
        <tissue>Pancreas</tissue>
    </source>
</reference>
<reference key="2">
    <citation type="submission" date="2003-06" db="EMBL/GenBank/DDBJ databases">
        <authorList>
            <consortium name="NIH - Xenopus Gene Collection (XGC) project"/>
        </authorList>
    </citation>
    <scope>NUCLEOTIDE SEQUENCE [LARGE SCALE MRNA]</scope>
</reference>
<organism>
    <name type="scientific">Xenopus laevis</name>
    <name type="common">African clawed frog</name>
    <dbReference type="NCBI Taxonomy" id="8355"/>
    <lineage>
        <taxon>Eukaryota</taxon>
        <taxon>Metazoa</taxon>
        <taxon>Chordata</taxon>
        <taxon>Craniata</taxon>
        <taxon>Vertebrata</taxon>
        <taxon>Euteleostomi</taxon>
        <taxon>Amphibia</taxon>
        <taxon>Batrachia</taxon>
        <taxon>Anura</taxon>
        <taxon>Pipoidea</taxon>
        <taxon>Pipidae</taxon>
        <taxon>Xenopodinae</taxon>
        <taxon>Xenopus</taxon>
        <taxon>Xenopus</taxon>
    </lineage>
</organism>
<name>GLUC2_XENLA</name>
<protein>
    <recommendedName>
        <fullName>Glucagon-2</fullName>
    </recommendedName>
    <alternativeName>
        <fullName>Glucagon II</fullName>
    </alternativeName>
    <component>
        <recommendedName>
            <fullName>Glucagon</fullName>
        </recommendedName>
    </component>
    <component>
        <recommendedName>
            <fullName>Glucagon-like peptide 1A</fullName>
            <shortName>GLP-1A</shortName>
        </recommendedName>
    </component>
    <component>
        <recommendedName>
            <fullName>Glucagon-like peptide 1B</fullName>
            <shortName>GLP-1B</shortName>
        </recommendedName>
    </component>
    <component>
        <recommendedName>
            <fullName>Glucagon-like peptide 1C</fullName>
            <shortName>GLP-1C</shortName>
        </recommendedName>
    </component>
</protein>
<comment type="function">
    <text>Promotes hydrolysis of glycogen and lipids, and raises the blood sugar level.</text>
</comment>
<comment type="subcellular location">
    <subcellularLocation>
        <location>Secreted</location>
    </subcellularLocation>
</comment>
<comment type="similarity">
    <text evidence="2">Belongs to the glucagon family.</text>
</comment>
<dbReference type="EMBL" id="AF004433">
    <property type="protein sequence ID" value="AAB65661.1"/>
    <property type="molecule type" value="mRNA"/>
</dbReference>
<dbReference type="EMBL" id="BC054234">
    <property type="protein sequence ID" value="AAH54234.1"/>
    <property type="molecule type" value="mRNA"/>
</dbReference>
<dbReference type="RefSeq" id="NP_001079787.1">
    <property type="nucleotide sequence ID" value="NM_001086318.2"/>
</dbReference>
<dbReference type="SMR" id="O42144"/>
<dbReference type="DNASU" id="379477"/>
<dbReference type="GeneID" id="379477"/>
<dbReference type="KEGG" id="xla:379477"/>
<dbReference type="CTD" id="379477"/>
<dbReference type="OMA" id="FTSDMSS"/>
<dbReference type="OrthoDB" id="9904258at2759"/>
<dbReference type="Proteomes" id="UP000186698">
    <property type="component" value="Chromosome 9_10S"/>
</dbReference>
<dbReference type="Bgee" id="379477">
    <property type="expression patterns" value="Expressed in pancreas and 3 other cell types or tissues"/>
</dbReference>
<dbReference type="GO" id="GO:0005615">
    <property type="term" value="C:extracellular space"/>
    <property type="evidence" value="ECO:0000318"/>
    <property type="project" value="GO_Central"/>
</dbReference>
<dbReference type="GO" id="GO:0031769">
    <property type="term" value="F:glucagon receptor binding"/>
    <property type="evidence" value="ECO:0000318"/>
    <property type="project" value="GO_Central"/>
</dbReference>
<dbReference type="GO" id="GO:0005179">
    <property type="term" value="F:hormone activity"/>
    <property type="evidence" value="ECO:0000318"/>
    <property type="project" value="GO_Central"/>
</dbReference>
<dbReference type="GO" id="GO:0007188">
    <property type="term" value="P:adenylate cyclase-modulating G protein-coupled receptor signaling pathway"/>
    <property type="evidence" value="ECO:0000318"/>
    <property type="project" value="GO_Central"/>
</dbReference>
<dbReference type="GO" id="GO:0043066">
    <property type="term" value="P:negative regulation of apoptotic process"/>
    <property type="evidence" value="ECO:0000318"/>
    <property type="project" value="GO_Central"/>
</dbReference>
<dbReference type="GO" id="GO:0035774">
    <property type="term" value="P:positive regulation of insulin secretion involved in cellular response to glucose stimulus"/>
    <property type="evidence" value="ECO:0000318"/>
    <property type="project" value="GO_Central"/>
</dbReference>
<dbReference type="GO" id="GO:0010737">
    <property type="term" value="P:protein kinase A signaling"/>
    <property type="evidence" value="ECO:0000318"/>
    <property type="project" value="GO_Central"/>
</dbReference>
<dbReference type="Gene3D" id="6.10.250.590">
    <property type="match status" value="4"/>
</dbReference>
<dbReference type="InterPro" id="IPR015550">
    <property type="entry name" value="Glucagon"/>
</dbReference>
<dbReference type="InterPro" id="IPR000532">
    <property type="entry name" value="Glucagon_GIP_secretin_VIP"/>
</dbReference>
<dbReference type="PANTHER" id="PTHR11418">
    <property type="entry name" value="GLUCAGON"/>
    <property type="match status" value="1"/>
</dbReference>
<dbReference type="PANTHER" id="PTHR11418:SF0">
    <property type="entry name" value="PRO-GLUCAGON"/>
    <property type="match status" value="1"/>
</dbReference>
<dbReference type="Pfam" id="PF00123">
    <property type="entry name" value="Hormone_2"/>
    <property type="match status" value="4"/>
</dbReference>
<dbReference type="PIRSF" id="PIRSF037818">
    <property type="entry name" value="Glucagon"/>
    <property type="match status" value="1"/>
</dbReference>
<dbReference type="PRINTS" id="PR00275">
    <property type="entry name" value="GLUCAGON"/>
</dbReference>
<dbReference type="SMART" id="SM00070">
    <property type="entry name" value="GLUCA"/>
    <property type="match status" value="4"/>
</dbReference>
<dbReference type="PROSITE" id="PS00260">
    <property type="entry name" value="GLUCAGON"/>
    <property type="match status" value="3"/>
</dbReference>
<accession>O42144</accession>
<accession>Q5D082</accession>
<keyword id="KW-0165">Cleavage on pair of basic residues</keyword>
<keyword id="KW-0372">Hormone</keyword>
<keyword id="KW-1185">Reference proteome</keyword>
<keyword id="KW-0964">Secreted</keyword>
<keyword id="KW-0732">Signal</keyword>
<gene>
    <name type="primary">gcg2</name>
</gene>
<proteinExistence type="evidence at transcript level"/>
<sequence>MKSTCYMIGILLLILQNTYQSPVPEADGSSRSVKAARNEAVDDSEQLKEVKRHSQGTFTSDYSKYLDSRRAQDFVQWLMNTKRSGGLSRRNADYERHAEGTFTSDVTQHLDEKAAKEFIDWLINGGPTKEIISRRNAEIERHAEGTYTNDVTEYLEEKATKAFIEWLIKGKPKKIRYSRHAEGTFTNDMTNYLEEKAAKEFVGWLINGRPKRKDLLEEH</sequence>